<feature type="chain" id="PRO_1000192334" description="Phosphoenolpyruvate carboxykinase (ATP)">
    <location>
        <begin position="1"/>
        <end position="513"/>
    </location>
</feature>
<feature type="binding site" evidence="1">
    <location>
        <position position="45"/>
    </location>
    <ligand>
        <name>substrate</name>
    </ligand>
</feature>
<feature type="binding site" evidence="1">
    <location>
        <position position="179"/>
    </location>
    <ligand>
        <name>substrate</name>
    </ligand>
</feature>
<feature type="binding site" evidence="1">
    <location>
        <position position="185"/>
    </location>
    <ligand>
        <name>ATP</name>
        <dbReference type="ChEBI" id="CHEBI:30616"/>
    </ligand>
</feature>
<feature type="binding site" evidence="1">
    <location>
        <position position="185"/>
    </location>
    <ligand>
        <name>Mn(2+)</name>
        <dbReference type="ChEBI" id="CHEBI:29035"/>
    </ligand>
</feature>
<feature type="binding site" evidence="1">
    <location>
        <position position="185"/>
    </location>
    <ligand>
        <name>substrate</name>
    </ligand>
</feature>
<feature type="binding site" evidence="1">
    <location>
        <position position="204"/>
    </location>
    <ligand>
        <name>ATP</name>
        <dbReference type="ChEBI" id="CHEBI:30616"/>
    </ligand>
</feature>
<feature type="binding site" evidence="1">
    <location>
        <position position="204"/>
    </location>
    <ligand>
        <name>Mn(2+)</name>
        <dbReference type="ChEBI" id="CHEBI:29035"/>
    </ligand>
</feature>
<feature type="binding site" evidence="1">
    <location>
        <begin position="220"/>
        <end position="228"/>
    </location>
    <ligand>
        <name>ATP</name>
        <dbReference type="ChEBI" id="CHEBI:30616"/>
    </ligand>
</feature>
<feature type="binding site" evidence="1">
    <location>
        <position position="241"/>
    </location>
    <ligand>
        <name>Mn(2+)</name>
        <dbReference type="ChEBI" id="CHEBI:29035"/>
    </ligand>
</feature>
<feature type="binding site" evidence="1">
    <location>
        <position position="269"/>
    </location>
    <ligand>
        <name>ATP</name>
        <dbReference type="ChEBI" id="CHEBI:30616"/>
    </ligand>
</feature>
<feature type="binding site" evidence="1">
    <location>
        <position position="305"/>
    </location>
    <ligand>
        <name>ATP</name>
        <dbReference type="ChEBI" id="CHEBI:30616"/>
    </ligand>
</feature>
<feature type="binding site" evidence="1">
    <location>
        <position position="305"/>
    </location>
    <ligand>
        <name>substrate</name>
    </ligand>
</feature>
<feature type="binding site" evidence="1">
    <location>
        <position position="431"/>
    </location>
    <ligand>
        <name>ATP</name>
        <dbReference type="ChEBI" id="CHEBI:30616"/>
    </ligand>
</feature>
<accession>B1KN33</accession>
<proteinExistence type="inferred from homology"/>
<reference key="1">
    <citation type="submission" date="2008-02" db="EMBL/GenBank/DDBJ databases">
        <title>Complete sequence of Shewanella woodyi ATCC 51908.</title>
        <authorList>
            <consortium name="US DOE Joint Genome Institute"/>
            <person name="Copeland A."/>
            <person name="Lucas S."/>
            <person name="Lapidus A."/>
            <person name="Glavina del Rio T."/>
            <person name="Dalin E."/>
            <person name="Tice H."/>
            <person name="Bruce D."/>
            <person name="Goodwin L."/>
            <person name="Pitluck S."/>
            <person name="Sims D."/>
            <person name="Brettin T."/>
            <person name="Detter J.C."/>
            <person name="Han C."/>
            <person name="Kuske C.R."/>
            <person name="Schmutz J."/>
            <person name="Larimer F."/>
            <person name="Land M."/>
            <person name="Hauser L."/>
            <person name="Kyrpides N."/>
            <person name="Lykidis A."/>
            <person name="Zhao J.-S."/>
            <person name="Richardson P."/>
        </authorList>
    </citation>
    <scope>NUCLEOTIDE SEQUENCE [LARGE SCALE GENOMIC DNA]</scope>
    <source>
        <strain>ATCC 51908 / MS32</strain>
    </source>
</reference>
<protein>
    <recommendedName>
        <fullName evidence="1">Phosphoenolpyruvate carboxykinase (ATP)</fullName>
        <shortName evidence="1">PCK</shortName>
        <shortName evidence="1">PEP carboxykinase</shortName>
        <shortName evidence="1">PEPCK</shortName>
        <ecNumber evidence="1">4.1.1.49</ecNumber>
    </recommendedName>
</protein>
<dbReference type="EC" id="4.1.1.49" evidence="1"/>
<dbReference type="EMBL" id="CP000961">
    <property type="protein sequence ID" value="ACA88990.1"/>
    <property type="molecule type" value="Genomic_DNA"/>
</dbReference>
<dbReference type="RefSeq" id="WP_012327307.1">
    <property type="nucleotide sequence ID" value="NC_010506.1"/>
</dbReference>
<dbReference type="SMR" id="B1KN33"/>
<dbReference type="STRING" id="392500.Swoo_4740"/>
<dbReference type="KEGG" id="swd:Swoo_4740"/>
<dbReference type="eggNOG" id="COG1866">
    <property type="taxonomic scope" value="Bacteria"/>
</dbReference>
<dbReference type="HOGENOM" id="CLU_018247_0_1_6"/>
<dbReference type="UniPathway" id="UPA00138"/>
<dbReference type="Proteomes" id="UP000002168">
    <property type="component" value="Chromosome"/>
</dbReference>
<dbReference type="GO" id="GO:0005829">
    <property type="term" value="C:cytosol"/>
    <property type="evidence" value="ECO:0007669"/>
    <property type="project" value="TreeGrafter"/>
</dbReference>
<dbReference type="GO" id="GO:0005524">
    <property type="term" value="F:ATP binding"/>
    <property type="evidence" value="ECO:0007669"/>
    <property type="project" value="UniProtKB-UniRule"/>
</dbReference>
<dbReference type="GO" id="GO:0046872">
    <property type="term" value="F:metal ion binding"/>
    <property type="evidence" value="ECO:0007669"/>
    <property type="project" value="UniProtKB-KW"/>
</dbReference>
<dbReference type="GO" id="GO:0004612">
    <property type="term" value="F:phosphoenolpyruvate carboxykinase (ATP) activity"/>
    <property type="evidence" value="ECO:0007669"/>
    <property type="project" value="UniProtKB-UniRule"/>
</dbReference>
<dbReference type="GO" id="GO:0006094">
    <property type="term" value="P:gluconeogenesis"/>
    <property type="evidence" value="ECO:0007669"/>
    <property type="project" value="UniProtKB-UniRule"/>
</dbReference>
<dbReference type="CDD" id="cd00484">
    <property type="entry name" value="PEPCK_ATP"/>
    <property type="match status" value="1"/>
</dbReference>
<dbReference type="FunFam" id="2.170.8.10:FF:000001">
    <property type="entry name" value="Phosphoenolpyruvate carboxykinase (ATP)"/>
    <property type="match status" value="1"/>
</dbReference>
<dbReference type="Gene3D" id="3.90.228.20">
    <property type="match status" value="1"/>
</dbReference>
<dbReference type="Gene3D" id="3.40.449.10">
    <property type="entry name" value="Phosphoenolpyruvate Carboxykinase, domain 1"/>
    <property type="match status" value="1"/>
</dbReference>
<dbReference type="Gene3D" id="2.170.8.10">
    <property type="entry name" value="Phosphoenolpyruvate Carboxykinase, domain 2"/>
    <property type="match status" value="1"/>
</dbReference>
<dbReference type="HAMAP" id="MF_00453">
    <property type="entry name" value="PEPCK_ATP"/>
    <property type="match status" value="1"/>
</dbReference>
<dbReference type="InterPro" id="IPR001272">
    <property type="entry name" value="PEP_carboxykinase_ATP"/>
</dbReference>
<dbReference type="InterPro" id="IPR013035">
    <property type="entry name" value="PEP_carboxykinase_C"/>
</dbReference>
<dbReference type="InterPro" id="IPR008210">
    <property type="entry name" value="PEP_carboxykinase_N"/>
</dbReference>
<dbReference type="InterPro" id="IPR015994">
    <property type="entry name" value="PEPCK_ATP_CS"/>
</dbReference>
<dbReference type="NCBIfam" id="TIGR00224">
    <property type="entry name" value="pckA"/>
    <property type="match status" value="1"/>
</dbReference>
<dbReference type="NCBIfam" id="NF006820">
    <property type="entry name" value="PRK09344.1-2"/>
    <property type="match status" value="1"/>
</dbReference>
<dbReference type="NCBIfam" id="NF006821">
    <property type="entry name" value="PRK09344.1-3"/>
    <property type="match status" value="1"/>
</dbReference>
<dbReference type="NCBIfam" id="NF006823">
    <property type="entry name" value="PRK09344.1-5"/>
    <property type="match status" value="1"/>
</dbReference>
<dbReference type="PANTHER" id="PTHR30031:SF0">
    <property type="entry name" value="PHOSPHOENOLPYRUVATE CARBOXYKINASE (ATP)"/>
    <property type="match status" value="1"/>
</dbReference>
<dbReference type="PANTHER" id="PTHR30031">
    <property type="entry name" value="PHOSPHOENOLPYRUVATE CARBOXYKINASE ATP"/>
    <property type="match status" value="1"/>
</dbReference>
<dbReference type="Pfam" id="PF01293">
    <property type="entry name" value="PEPCK_ATP"/>
    <property type="match status" value="1"/>
</dbReference>
<dbReference type="PIRSF" id="PIRSF006294">
    <property type="entry name" value="PEP_crbxkin"/>
    <property type="match status" value="1"/>
</dbReference>
<dbReference type="SUPFAM" id="SSF68923">
    <property type="entry name" value="PEP carboxykinase N-terminal domain"/>
    <property type="match status" value="1"/>
</dbReference>
<dbReference type="SUPFAM" id="SSF53795">
    <property type="entry name" value="PEP carboxykinase-like"/>
    <property type="match status" value="1"/>
</dbReference>
<dbReference type="PROSITE" id="PS00532">
    <property type="entry name" value="PEPCK_ATP"/>
    <property type="match status" value="1"/>
</dbReference>
<evidence type="ECO:0000255" key="1">
    <source>
        <dbReference type="HAMAP-Rule" id="MF_00453"/>
    </source>
</evidence>
<comment type="function">
    <text evidence="1">Involved in the gluconeogenesis. Catalyzes the conversion of oxaloacetate (OAA) to phosphoenolpyruvate (PEP) through direct phosphoryl transfer between the nucleoside triphosphate and OAA.</text>
</comment>
<comment type="catalytic activity">
    <reaction evidence="1">
        <text>oxaloacetate + ATP = phosphoenolpyruvate + ADP + CO2</text>
        <dbReference type="Rhea" id="RHEA:18617"/>
        <dbReference type="ChEBI" id="CHEBI:16452"/>
        <dbReference type="ChEBI" id="CHEBI:16526"/>
        <dbReference type="ChEBI" id="CHEBI:30616"/>
        <dbReference type="ChEBI" id="CHEBI:58702"/>
        <dbReference type="ChEBI" id="CHEBI:456216"/>
        <dbReference type="EC" id="4.1.1.49"/>
    </reaction>
</comment>
<comment type="cofactor">
    <cofactor evidence="1">
        <name>Mn(2+)</name>
        <dbReference type="ChEBI" id="CHEBI:29035"/>
    </cofactor>
    <text evidence="1">Binds 1 Mn(2+) ion per subunit.</text>
</comment>
<comment type="pathway">
    <text evidence="1">Carbohydrate biosynthesis; gluconeogenesis.</text>
</comment>
<comment type="subunit">
    <text evidence="1">Monomer.</text>
</comment>
<comment type="subcellular location">
    <subcellularLocation>
        <location evidence="1">Cytoplasm</location>
    </subcellularLocation>
</comment>
<comment type="similarity">
    <text evidence="1">Belongs to the phosphoenolpyruvate carboxykinase (ATP) family.</text>
</comment>
<keyword id="KW-0067">ATP-binding</keyword>
<keyword id="KW-0963">Cytoplasm</keyword>
<keyword id="KW-0210">Decarboxylase</keyword>
<keyword id="KW-0312">Gluconeogenesis</keyword>
<keyword id="KW-0456">Lyase</keyword>
<keyword id="KW-0464">Manganese</keyword>
<keyword id="KW-0479">Metal-binding</keyword>
<keyword id="KW-0547">Nucleotide-binding</keyword>
<keyword id="KW-1185">Reference proteome</keyword>
<gene>
    <name evidence="1" type="primary">pckA</name>
    <name type="ordered locus">Swoo_4740</name>
</gene>
<name>PCKA_SHEWM</name>
<organism>
    <name type="scientific">Shewanella woodyi (strain ATCC 51908 / MS32)</name>
    <dbReference type="NCBI Taxonomy" id="392500"/>
    <lineage>
        <taxon>Bacteria</taxon>
        <taxon>Pseudomonadati</taxon>
        <taxon>Pseudomonadota</taxon>
        <taxon>Gammaproteobacteria</taxon>
        <taxon>Alteromonadales</taxon>
        <taxon>Shewanellaceae</taxon>
        <taxon>Shewanella</taxon>
    </lineage>
</organism>
<sequence length="513" mass="56084">MADGTPRTHRNPQAAQLIEIALSRGEGELTANGALVAKTGERTGRSPNDRFIVKEPSSENDIDWGSVNKPFEQEAFTALWNRVEAYLGDKELFVSELEVGADDAHYQPIQVTTETAWHQLFARNLFIVPEEFNSADKPVWQIINAPGFECVPERDGTHSDATVILNFAERKVLLAGLKYAGEMKKSMFSVQNFLLPAKGVLPMHCSANVGKEGDTTLFFGLSGTGKTTLSADPKRFLIGDDEHGWAPGGVFNIEGGCYAKCIDLSQKNEPVIWNAIRFGTVLENVVMDENRIPDYTNSTLTENSRAAYPLEHIELRKAENRGAEPHAVVFLTCDVSGVLPPVSILTKEQAAYHFLSGYTAKVGSTEMGSSSAIQSTFSTCFGAPFFPRPAGVYAELLMKRIESFGSQVYLVNTGWTGGPHGVGKRFDIPTTRAIVDAIVSGELKGVETEHLEKLNLHVPVAVPGVETQLLNPVNTWADKAQYAEYAQQLADSFTANFEKYQVPDSIKHAGPNA</sequence>